<sequence>LCCPPQXCGPDCASPCC</sequence>
<proteinExistence type="evidence at protein level"/>
<comment type="subcellular location">
    <subcellularLocation>
        <location evidence="2">Secreted</location>
    </subcellularLocation>
</comment>
<comment type="tissue specificity">
    <text evidence="2">Expressed by the venom duct.</text>
</comment>
<comment type="domain">
    <text evidence="4">The cysteine framework is III (CC-C-C-CC). Classified in the M-3 branch, since 3 residues stand between the fourth and the fifth cysteine residues.</text>
</comment>
<comment type="similarity">
    <text evidence="4">Belongs to the conotoxin M superfamily.</text>
</comment>
<accession>P85023</accession>
<dbReference type="ConoServer" id="1487">
    <property type="toxin name" value="Reg12l"/>
</dbReference>
<dbReference type="GO" id="GO:0005576">
    <property type="term" value="C:extracellular region"/>
    <property type="evidence" value="ECO:0007669"/>
    <property type="project" value="UniProtKB-SubCell"/>
</dbReference>
<dbReference type="GO" id="GO:0090729">
    <property type="term" value="F:toxin activity"/>
    <property type="evidence" value="ECO:0007669"/>
    <property type="project" value="UniProtKB-KW"/>
</dbReference>
<reference key="1">
    <citation type="journal article" date="2006" name="Prog. Mol. Subcell. Biol.">
        <title>Hyperhydroxylation: a new strategy for neuronal targeting by venomous marine molluscs.</title>
        <authorList>
            <person name="Franco A."/>
            <person name="Pisarewicz K."/>
            <person name="Moller C."/>
            <person name="Mora D."/>
            <person name="Fields G.B."/>
            <person name="Mari F."/>
        </authorList>
    </citation>
    <scope>PROTEIN SEQUENCE</scope>
    <scope>SUBCELLULAR LOCATION</scope>
    <scope>TISSUE SPECIFICITY</scope>
    <scope>HYDROXYLATION AT PRO-4; PRO-5; PRO-10 AND PRO-15</scope>
    <source>
        <tissue>Venom</tissue>
    </source>
</reference>
<organism>
    <name type="scientific">Conus regius</name>
    <name type="common">Crown cone</name>
    <dbReference type="NCBI Taxonomy" id="101314"/>
    <lineage>
        <taxon>Eukaryota</taxon>
        <taxon>Metazoa</taxon>
        <taxon>Spiralia</taxon>
        <taxon>Lophotrochozoa</taxon>
        <taxon>Mollusca</taxon>
        <taxon>Gastropoda</taxon>
        <taxon>Caenogastropoda</taxon>
        <taxon>Neogastropoda</taxon>
        <taxon>Conoidea</taxon>
        <taxon>Conidae</taxon>
        <taxon>Conus</taxon>
        <taxon>Stephanoconus</taxon>
    </lineage>
</organism>
<name>CMCB_CONRE</name>
<protein>
    <recommendedName>
        <fullName evidence="3">Conotoxin Reg12b</fullName>
    </recommendedName>
    <alternativeName>
        <fullName>Reg12l</fullName>
    </alternativeName>
</protein>
<evidence type="ECO:0000250" key="1">
    <source>
        <dbReference type="UniProtKB" id="A0A0B4J184"/>
    </source>
</evidence>
<evidence type="ECO:0000269" key="2">
    <source>
    </source>
</evidence>
<evidence type="ECO:0000303" key="3">
    <source>
    </source>
</evidence>
<evidence type="ECO:0000305" key="4"/>
<keyword id="KW-0903">Direct protein sequencing</keyword>
<keyword id="KW-1015">Disulfide bond</keyword>
<keyword id="KW-0379">Hydroxylation</keyword>
<keyword id="KW-0964">Secreted</keyword>
<keyword id="KW-0800">Toxin</keyword>
<feature type="peptide" id="PRO_0000259397" description="Conotoxin Reg12b" evidence="2">
    <location>
        <begin position="1"/>
        <end position="17"/>
    </location>
</feature>
<feature type="modified residue" description="4-hydroxyproline" evidence="2">
    <location>
        <position position="4"/>
    </location>
</feature>
<feature type="modified residue" description="4-hydroxyproline" evidence="2">
    <location>
        <position position="5"/>
    </location>
</feature>
<feature type="modified residue" description="4-hydroxyproline" evidence="2">
    <location>
        <position position="10"/>
    </location>
</feature>
<feature type="modified residue" description="4-hydroxyproline" evidence="2">
    <location>
        <position position="15"/>
    </location>
</feature>
<feature type="disulfide bond" evidence="1">
    <location>
        <begin position="2"/>
        <end position="16"/>
    </location>
</feature>
<feature type="disulfide bond" evidence="1">
    <location>
        <begin position="3"/>
        <end position="17"/>
    </location>
</feature>
<feature type="disulfide bond" evidence="1">
    <location>
        <begin position="8"/>
        <end position="12"/>
    </location>
</feature>